<name>UIDR_SHIFL</name>
<comment type="function">
    <text evidence="1">Repressor for the uidRABC (gusRABC) operon.</text>
</comment>
<feature type="chain" id="PRO_0000070631" description="HTH-type transcriptional regulator UidR">
    <location>
        <begin position="1"/>
        <end position="196"/>
    </location>
</feature>
<feature type="domain" description="HTH tetR-type" evidence="2">
    <location>
        <begin position="10"/>
        <end position="70"/>
    </location>
</feature>
<feature type="DNA-binding region" description="H-T-H motif" evidence="2">
    <location>
        <begin position="33"/>
        <end position="52"/>
    </location>
</feature>
<dbReference type="EMBL" id="AE005674">
    <property type="protein sequence ID" value="AAN43223.1"/>
    <property type="molecule type" value="Genomic_DNA"/>
</dbReference>
<dbReference type="EMBL" id="AE014073">
    <property type="protein sequence ID" value="AAP17110.1"/>
    <property type="molecule type" value="Genomic_DNA"/>
</dbReference>
<dbReference type="RefSeq" id="NP_707516.1">
    <property type="nucleotide sequence ID" value="NC_004337.2"/>
</dbReference>
<dbReference type="RefSeq" id="WP_000969092.1">
    <property type="nucleotide sequence ID" value="NZ_WPGW01000024.1"/>
</dbReference>
<dbReference type="SMR" id="P0ACT9"/>
<dbReference type="STRING" id="198214.SF1641"/>
<dbReference type="PaxDb" id="198214-SF1641"/>
<dbReference type="GeneID" id="1024844"/>
<dbReference type="GeneID" id="75171678"/>
<dbReference type="KEGG" id="sfl:SF1641"/>
<dbReference type="KEGG" id="sfx:S1772"/>
<dbReference type="PATRIC" id="fig|198214.7.peg.1936"/>
<dbReference type="HOGENOM" id="CLU_069356_15_12_6"/>
<dbReference type="Proteomes" id="UP000001006">
    <property type="component" value="Chromosome"/>
</dbReference>
<dbReference type="Proteomes" id="UP000002673">
    <property type="component" value="Chromosome"/>
</dbReference>
<dbReference type="GO" id="GO:0003700">
    <property type="term" value="F:DNA-binding transcription factor activity"/>
    <property type="evidence" value="ECO:0007669"/>
    <property type="project" value="TreeGrafter"/>
</dbReference>
<dbReference type="GO" id="GO:0000976">
    <property type="term" value="F:transcription cis-regulatory region binding"/>
    <property type="evidence" value="ECO:0007669"/>
    <property type="project" value="TreeGrafter"/>
</dbReference>
<dbReference type="Gene3D" id="1.10.357.10">
    <property type="entry name" value="Tetracycline Repressor, domain 2"/>
    <property type="match status" value="1"/>
</dbReference>
<dbReference type="InterPro" id="IPR023772">
    <property type="entry name" value="DNA-bd_HTH_TetR-type_CS"/>
</dbReference>
<dbReference type="InterPro" id="IPR009057">
    <property type="entry name" value="Homeodomain-like_sf"/>
</dbReference>
<dbReference type="InterPro" id="IPR050109">
    <property type="entry name" value="HTH-type_TetR-like_transc_reg"/>
</dbReference>
<dbReference type="InterPro" id="IPR001647">
    <property type="entry name" value="HTH_TetR"/>
</dbReference>
<dbReference type="InterPro" id="IPR036271">
    <property type="entry name" value="Tet_transcr_reg_TetR-rel_C_sf"/>
</dbReference>
<dbReference type="PANTHER" id="PTHR30055">
    <property type="entry name" value="HTH-TYPE TRANSCRIPTIONAL REGULATOR RUTR"/>
    <property type="match status" value="1"/>
</dbReference>
<dbReference type="PANTHER" id="PTHR30055:SF223">
    <property type="entry name" value="HTH-TYPE TRANSCRIPTIONAL REGULATOR UIDR"/>
    <property type="match status" value="1"/>
</dbReference>
<dbReference type="Pfam" id="PF00440">
    <property type="entry name" value="TetR_N"/>
    <property type="match status" value="1"/>
</dbReference>
<dbReference type="PRINTS" id="PR00455">
    <property type="entry name" value="HTHTETR"/>
</dbReference>
<dbReference type="SUPFAM" id="SSF46689">
    <property type="entry name" value="Homeodomain-like"/>
    <property type="match status" value="1"/>
</dbReference>
<dbReference type="SUPFAM" id="SSF48498">
    <property type="entry name" value="Tetracyclin repressor-like, C-terminal domain"/>
    <property type="match status" value="1"/>
</dbReference>
<dbReference type="PROSITE" id="PS01081">
    <property type="entry name" value="HTH_TETR_1"/>
    <property type="match status" value="1"/>
</dbReference>
<dbReference type="PROSITE" id="PS50977">
    <property type="entry name" value="HTH_TETR_2"/>
    <property type="match status" value="1"/>
</dbReference>
<protein>
    <recommendedName>
        <fullName>HTH-type transcriptional regulator UidR</fullName>
    </recommendedName>
    <alternativeName>
        <fullName>Uid operon repressor</fullName>
    </alternativeName>
</protein>
<keyword id="KW-0238">DNA-binding</keyword>
<keyword id="KW-1185">Reference proteome</keyword>
<keyword id="KW-0678">Repressor</keyword>
<keyword id="KW-0804">Transcription</keyword>
<keyword id="KW-0805">Transcription regulation</keyword>
<accession>P0ACT9</accession>
<accession>P76892</accession>
<accession>P76895</accession>
<accession>Q59431</accession>
<reference key="1">
    <citation type="journal article" date="2002" name="Nucleic Acids Res.">
        <title>Genome sequence of Shigella flexneri 2a: insights into pathogenicity through comparison with genomes of Escherichia coli K12 and O157.</title>
        <authorList>
            <person name="Jin Q."/>
            <person name="Yuan Z."/>
            <person name="Xu J."/>
            <person name="Wang Y."/>
            <person name="Shen Y."/>
            <person name="Lu W."/>
            <person name="Wang J."/>
            <person name="Liu H."/>
            <person name="Yang J."/>
            <person name="Yang F."/>
            <person name="Zhang X."/>
            <person name="Zhang J."/>
            <person name="Yang G."/>
            <person name="Wu H."/>
            <person name="Qu D."/>
            <person name="Dong J."/>
            <person name="Sun L."/>
            <person name="Xue Y."/>
            <person name="Zhao A."/>
            <person name="Gao Y."/>
            <person name="Zhu J."/>
            <person name="Kan B."/>
            <person name="Ding K."/>
            <person name="Chen S."/>
            <person name="Cheng H."/>
            <person name="Yao Z."/>
            <person name="He B."/>
            <person name="Chen R."/>
            <person name="Ma D."/>
            <person name="Qiang B."/>
            <person name="Wen Y."/>
            <person name="Hou Y."/>
            <person name="Yu J."/>
        </authorList>
    </citation>
    <scope>NUCLEOTIDE SEQUENCE [LARGE SCALE GENOMIC DNA]</scope>
    <source>
        <strain>301 / Serotype 2a</strain>
    </source>
</reference>
<reference key="2">
    <citation type="journal article" date="2003" name="Infect. Immun.">
        <title>Complete genome sequence and comparative genomics of Shigella flexneri serotype 2a strain 2457T.</title>
        <authorList>
            <person name="Wei J."/>
            <person name="Goldberg M.B."/>
            <person name="Burland V."/>
            <person name="Venkatesan M.M."/>
            <person name="Deng W."/>
            <person name="Fournier G."/>
            <person name="Mayhew G.F."/>
            <person name="Plunkett G. III"/>
            <person name="Rose D.J."/>
            <person name="Darling A."/>
            <person name="Mau B."/>
            <person name="Perna N.T."/>
            <person name="Payne S.M."/>
            <person name="Runyen-Janecky L.J."/>
            <person name="Zhou S."/>
            <person name="Schwartz D.C."/>
            <person name="Blattner F.R."/>
        </authorList>
    </citation>
    <scope>NUCLEOTIDE SEQUENCE [LARGE SCALE GENOMIC DNA]</scope>
    <source>
        <strain>ATCC 700930 / 2457T / Serotype 2a</strain>
    </source>
</reference>
<proteinExistence type="inferred from homology"/>
<evidence type="ECO:0000250" key="1"/>
<evidence type="ECO:0000255" key="2">
    <source>
        <dbReference type="PROSITE-ProRule" id="PRU00335"/>
    </source>
</evidence>
<gene>
    <name type="primary">uidR</name>
    <name type="ordered locus">SF1641</name>
    <name type="ordered locus">S1772</name>
</gene>
<sequence>MMDNMQTEAQPTRTRILNAAREIFSENGFHSASMKAICKSCAISPGTLYHHFISKEALIQAIILQDQERALARFREPIEGIHFVDYMVESIVSLTHEAFGQRALVVEIMAEGMRNPQVAAMLKNKHMTITEFVAQRMRDAQQKGEISPDINTAMTSRLLLDLTYGVLADIEAEDLAREASFAQGLRAMIGGILTAS</sequence>
<organism>
    <name type="scientific">Shigella flexneri</name>
    <dbReference type="NCBI Taxonomy" id="623"/>
    <lineage>
        <taxon>Bacteria</taxon>
        <taxon>Pseudomonadati</taxon>
        <taxon>Pseudomonadota</taxon>
        <taxon>Gammaproteobacteria</taxon>
        <taxon>Enterobacterales</taxon>
        <taxon>Enterobacteriaceae</taxon>
        <taxon>Shigella</taxon>
    </lineage>
</organism>